<name>SYT_PSEA8</name>
<feature type="chain" id="PRO_1000199561" description="Threonine--tRNA ligase">
    <location>
        <begin position="1"/>
        <end position="640"/>
    </location>
</feature>
<feature type="domain" description="TGS" evidence="2">
    <location>
        <begin position="1"/>
        <end position="61"/>
    </location>
</feature>
<feature type="region of interest" description="Catalytic" evidence="1">
    <location>
        <begin position="242"/>
        <end position="533"/>
    </location>
</feature>
<feature type="binding site" evidence="1">
    <location>
        <position position="333"/>
    </location>
    <ligand>
        <name>Zn(2+)</name>
        <dbReference type="ChEBI" id="CHEBI:29105"/>
    </ligand>
</feature>
<feature type="binding site" evidence="1">
    <location>
        <position position="384"/>
    </location>
    <ligand>
        <name>Zn(2+)</name>
        <dbReference type="ChEBI" id="CHEBI:29105"/>
    </ligand>
</feature>
<feature type="binding site" evidence="1">
    <location>
        <position position="510"/>
    </location>
    <ligand>
        <name>Zn(2+)</name>
        <dbReference type="ChEBI" id="CHEBI:29105"/>
    </ligand>
</feature>
<accession>B7V188</accession>
<evidence type="ECO:0000255" key="1">
    <source>
        <dbReference type="HAMAP-Rule" id="MF_00184"/>
    </source>
</evidence>
<evidence type="ECO:0000255" key="2">
    <source>
        <dbReference type="PROSITE-ProRule" id="PRU01228"/>
    </source>
</evidence>
<reference key="1">
    <citation type="journal article" date="2009" name="Genome Res.">
        <title>Newly introduced genomic prophage islands are critical determinants of in vivo competitiveness in the Liverpool epidemic strain of Pseudomonas aeruginosa.</title>
        <authorList>
            <person name="Winstanley C."/>
            <person name="Langille M.G.I."/>
            <person name="Fothergill J.L."/>
            <person name="Kukavica-Ibrulj I."/>
            <person name="Paradis-Bleau C."/>
            <person name="Sanschagrin F."/>
            <person name="Thomson N.R."/>
            <person name="Winsor G.L."/>
            <person name="Quail M.A."/>
            <person name="Lennard N."/>
            <person name="Bignell A."/>
            <person name="Clarke L."/>
            <person name="Seeger K."/>
            <person name="Saunders D."/>
            <person name="Harris D."/>
            <person name="Parkhill J."/>
            <person name="Hancock R.E.W."/>
            <person name="Brinkman F.S.L."/>
            <person name="Levesque R.C."/>
        </authorList>
    </citation>
    <scope>NUCLEOTIDE SEQUENCE [LARGE SCALE GENOMIC DNA]</scope>
    <source>
        <strain>LESB58</strain>
    </source>
</reference>
<gene>
    <name evidence="1" type="primary">thrS</name>
    <name type="ordered locus">PLES_23391</name>
</gene>
<sequence length="640" mass="73080">MPIITLPDGSQRSFDHPVSVAEVAQSIGAGLAKATLAGKVDGRLVDACDTIDRDATLQIITPKDEEGLEIIRHSCAHLVGHAVKQLYPTAKMVIGPVIEEGFYYDIFFERPFTPEDMAAIQQRMRELIDKDYDVIKKMTPRAEVIELFKSRGEDYKLRLIDDMPDEKAMGLYFHEEYVDMCRGPHVPNTRFLKAFQLTKISGAYWRGDSKNEQLQRIYGTAWADKKQLAAYIQRIEEAEKRDHRRIGKQLDLFHLQEEAPGMVFWHPNGWSVYQVLEQYMRKVQRDHGYVEVRTPQVVDRILWERSGHWSNYAENMFTTSSESRDYAVKPMNCPCHVQIFNQGLKSYRDLPLRLAEFGACHRNEPSGALHGIMRVRGFTQDDAHIFCTEEQVKKEAADFIKLTLQVYRDFGFTDIAMKLSTRPAKRVGSDELWDRAEGALADALNESGLAWEYQPGEGAFYGPKIEFTLKDCLGRNWQCGTLQYDPNLPERLDASYIAEDNNRKRPVMLHRAILGSFERFIGMLIEHYAGAFPAWLAPTQAVVMNITDKQADFAAEVVRILGESGFRAKSDLRNEKIGFKIREHTLLKVPYLLVIGDREVESKAVAVRTREGEDLGSMPVTQFAELLAQAVSRRGRQDSE</sequence>
<proteinExistence type="inferred from homology"/>
<organism>
    <name type="scientific">Pseudomonas aeruginosa (strain LESB58)</name>
    <dbReference type="NCBI Taxonomy" id="557722"/>
    <lineage>
        <taxon>Bacteria</taxon>
        <taxon>Pseudomonadati</taxon>
        <taxon>Pseudomonadota</taxon>
        <taxon>Gammaproteobacteria</taxon>
        <taxon>Pseudomonadales</taxon>
        <taxon>Pseudomonadaceae</taxon>
        <taxon>Pseudomonas</taxon>
    </lineage>
</organism>
<protein>
    <recommendedName>
        <fullName evidence="1">Threonine--tRNA ligase</fullName>
        <ecNumber evidence="1">6.1.1.3</ecNumber>
    </recommendedName>
    <alternativeName>
        <fullName evidence="1">Threonyl-tRNA synthetase</fullName>
        <shortName evidence="1">ThrRS</shortName>
    </alternativeName>
</protein>
<comment type="function">
    <text evidence="1">Catalyzes the attachment of threonine to tRNA(Thr) in a two-step reaction: L-threonine is first activated by ATP to form Thr-AMP and then transferred to the acceptor end of tRNA(Thr). Also edits incorrectly charged L-seryl-tRNA(Thr).</text>
</comment>
<comment type="catalytic activity">
    <reaction evidence="1">
        <text>tRNA(Thr) + L-threonine + ATP = L-threonyl-tRNA(Thr) + AMP + diphosphate + H(+)</text>
        <dbReference type="Rhea" id="RHEA:24624"/>
        <dbReference type="Rhea" id="RHEA-COMP:9670"/>
        <dbReference type="Rhea" id="RHEA-COMP:9704"/>
        <dbReference type="ChEBI" id="CHEBI:15378"/>
        <dbReference type="ChEBI" id="CHEBI:30616"/>
        <dbReference type="ChEBI" id="CHEBI:33019"/>
        <dbReference type="ChEBI" id="CHEBI:57926"/>
        <dbReference type="ChEBI" id="CHEBI:78442"/>
        <dbReference type="ChEBI" id="CHEBI:78534"/>
        <dbReference type="ChEBI" id="CHEBI:456215"/>
        <dbReference type="EC" id="6.1.1.3"/>
    </reaction>
</comment>
<comment type="cofactor">
    <cofactor evidence="1">
        <name>Zn(2+)</name>
        <dbReference type="ChEBI" id="CHEBI:29105"/>
    </cofactor>
    <text evidence="1">Binds 1 zinc ion per subunit.</text>
</comment>
<comment type="subunit">
    <text evidence="1">Homodimer.</text>
</comment>
<comment type="subcellular location">
    <subcellularLocation>
        <location evidence="1">Cytoplasm</location>
    </subcellularLocation>
</comment>
<comment type="similarity">
    <text evidence="1">Belongs to the class-II aminoacyl-tRNA synthetase family.</text>
</comment>
<keyword id="KW-0030">Aminoacyl-tRNA synthetase</keyword>
<keyword id="KW-0067">ATP-binding</keyword>
<keyword id="KW-0963">Cytoplasm</keyword>
<keyword id="KW-0436">Ligase</keyword>
<keyword id="KW-0479">Metal-binding</keyword>
<keyword id="KW-0547">Nucleotide-binding</keyword>
<keyword id="KW-0648">Protein biosynthesis</keyword>
<keyword id="KW-0694">RNA-binding</keyword>
<keyword id="KW-0820">tRNA-binding</keyword>
<keyword id="KW-0862">Zinc</keyword>
<dbReference type="EC" id="6.1.1.3" evidence="1"/>
<dbReference type="EMBL" id="FM209186">
    <property type="protein sequence ID" value="CAW27066.1"/>
    <property type="molecule type" value="Genomic_DNA"/>
</dbReference>
<dbReference type="RefSeq" id="WP_003090677.1">
    <property type="nucleotide sequence ID" value="NC_011770.1"/>
</dbReference>
<dbReference type="SMR" id="B7V188"/>
<dbReference type="KEGG" id="pag:PLES_23391"/>
<dbReference type="HOGENOM" id="CLU_008554_0_1_6"/>
<dbReference type="GO" id="GO:0005829">
    <property type="term" value="C:cytosol"/>
    <property type="evidence" value="ECO:0007669"/>
    <property type="project" value="TreeGrafter"/>
</dbReference>
<dbReference type="GO" id="GO:0005524">
    <property type="term" value="F:ATP binding"/>
    <property type="evidence" value="ECO:0007669"/>
    <property type="project" value="UniProtKB-UniRule"/>
</dbReference>
<dbReference type="GO" id="GO:0046872">
    <property type="term" value="F:metal ion binding"/>
    <property type="evidence" value="ECO:0007669"/>
    <property type="project" value="UniProtKB-KW"/>
</dbReference>
<dbReference type="GO" id="GO:0004829">
    <property type="term" value="F:threonine-tRNA ligase activity"/>
    <property type="evidence" value="ECO:0007669"/>
    <property type="project" value="UniProtKB-UniRule"/>
</dbReference>
<dbReference type="GO" id="GO:0000049">
    <property type="term" value="F:tRNA binding"/>
    <property type="evidence" value="ECO:0007669"/>
    <property type="project" value="UniProtKB-KW"/>
</dbReference>
<dbReference type="GO" id="GO:0006435">
    <property type="term" value="P:threonyl-tRNA aminoacylation"/>
    <property type="evidence" value="ECO:0007669"/>
    <property type="project" value="UniProtKB-UniRule"/>
</dbReference>
<dbReference type="CDD" id="cd01667">
    <property type="entry name" value="TGS_ThrRS"/>
    <property type="match status" value="1"/>
</dbReference>
<dbReference type="CDD" id="cd00860">
    <property type="entry name" value="ThrRS_anticodon"/>
    <property type="match status" value="1"/>
</dbReference>
<dbReference type="CDD" id="cd00771">
    <property type="entry name" value="ThrRS_core"/>
    <property type="match status" value="1"/>
</dbReference>
<dbReference type="FunFam" id="3.10.20.30:FF:000005">
    <property type="entry name" value="Threonine--tRNA ligase"/>
    <property type="match status" value="1"/>
</dbReference>
<dbReference type="FunFam" id="3.30.54.20:FF:000002">
    <property type="entry name" value="Threonine--tRNA ligase"/>
    <property type="match status" value="1"/>
</dbReference>
<dbReference type="FunFam" id="3.30.930.10:FF:000002">
    <property type="entry name" value="Threonine--tRNA ligase"/>
    <property type="match status" value="1"/>
</dbReference>
<dbReference type="FunFam" id="3.40.50.800:FF:000001">
    <property type="entry name" value="Threonine--tRNA ligase"/>
    <property type="match status" value="1"/>
</dbReference>
<dbReference type="FunFam" id="3.30.980.10:FF:000005">
    <property type="entry name" value="Threonyl-tRNA synthetase, mitochondrial"/>
    <property type="match status" value="1"/>
</dbReference>
<dbReference type="Gene3D" id="3.10.20.30">
    <property type="match status" value="1"/>
</dbReference>
<dbReference type="Gene3D" id="3.30.54.20">
    <property type="match status" value="1"/>
</dbReference>
<dbReference type="Gene3D" id="3.40.50.800">
    <property type="entry name" value="Anticodon-binding domain"/>
    <property type="match status" value="1"/>
</dbReference>
<dbReference type="Gene3D" id="3.30.930.10">
    <property type="entry name" value="Bira Bifunctional Protein, Domain 2"/>
    <property type="match status" value="1"/>
</dbReference>
<dbReference type="Gene3D" id="3.30.980.10">
    <property type="entry name" value="Threonyl-trna Synthetase, Chain A, domain 2"/>
    <property type="match status" value="1"/>
</dbReference>
<dbReference type="HAMAP" id="MF_00184">
    <property type="entry name" value="Thr_tRNA_synth"/>
    <property type="match status" value="1"/>
</dbReference>
<dbReference type="InterPro" id="IPR002314">
    <property type="entry name" value="aa-tRNA-synt_IIb"/>
</dbReference>
<dbReference type="InterPro" id="IPR006195">
    <property type="entry name" value="aa-tRNA-synth_II"/>
</dbReference>
<dbReference type="InterPro" id="IPR045864">
    <property type="entry name" value="aa-tRNA-synth_II/BPL/LPL"/>
</dbReference>
<dbReference type="InterPro" id="IPR004154">
    <property type="entry name" value="Anticodon-bd"/>
</dbReference>
<dbReference type="InterPro" id="IPR036621">
    <property type="entry name" value="Anticodon-bd_dom_sf"/>
</dbReference>
<dbReference type="InterPro" id="IPR012675">
    <property type="entry name" value="Beta-grasp_dom_sf"/>
</dbReference>
<dbReference type="InterPro" id="IPR004095">
    <property type="entry name" value="TGS"/>
</dbReference>
<dbReference type="InterPro" id="IPR012676">
    <property type="entry name" value="TGS-like"/>
</dbReference>
<dbReference type="InterPro" id="IPR002320">
    <property type="entry name" value="Thr-tRNA-ligase_IIa"/>
</dbReference>
<dbReference type="InterPro" id="IPR018163">
    <property type="entry name" value="Thr/Ala-tRNA-synth_IIc_edit"/>
</dbReference>
<dbReference type="InterPro" id="IPR047246">
    <property type="entry name" value="ThrRS_anticodon"/>
</dbReference>
<dbReference type="InterPro" id="IPR033728">
    <property type="entry name" value="ThrRS_core"/>
</dbReference>
<dbReference type="InterPro" id="IPR012947">
    <property type="entry name" value="tRNA_SAD"/>
</dbReference>
<dbReference type="NCBIfam" id="TIGR00418">
    <property type="entry name" value="thrS"/>
    <property type="match status" value="1"/>
</dbReference>
<dbReference type="PANTHER" id="PTHR11451:SF44">
    <property type="entry name" value="THREONINE--TRNA LIGASE, CHLOROPLASTIC_MITOCHONDRIAL 2"/>
    <property type="match status" value="1"/>
</dbReference>
<dbReference type="PANTHER" id="PTHR11451">
    <property type="entry name" value="THREONINE-TRNA LIGASE"/>
    <property type="match status" value="1"/>
</dbReference>
<dbReference type="Pfam" id="PF03129">
    <property type="entry name" value="HGTP_anticodon"/>
    <property type="match status" value="1"/>
</dbReference>
<dbReference type="Pfam" id="PF02824">
    <property type="entry name" value="TGS"/>
    <property type="match status" value="1"/>
</dbReference>
<dbReference type="Pfam" id="PF00587">
    <property type="entry name" value="tRNA-synt_2b"/>
    <property type="match status" value="1"/>
</dbReference>
<dbReference type="Pfam" id="PF07973">
    <property type="entry name" value="tRNA_SAD"/>
    <property type="match status" value="1"/>
</dbReference>
<dbReference type="PRINTS" id="PR01047">
    <property type="entry name" value="TRNASYNTHTHR"/>
</dbReference>
<dbReference type="SMART" id="SM00863">
    <property type="entry name" value="tRNA_SAD"/>
    <property type="match status" value="1"/>
</dbReference>
<dbReference type="SUPFAM" id="SSF52954">
    <property type="entry name" value="Class II aaRS ABD-related"/>
    <property type="match status" value="1"/>
</dbReference>
<dbReference type="SUPFAM" id="SSF55681">
    <property type="entry name" value="Class II aaRS and biotin synthetases"/>
    <property type="match status" value="1"/>
</dbReference>
<dbReference type="SUPFAM" id="SSF81271">
    <property type="entry name" value="TGS-like"/>
    <property type="match status" value="1"/>
</dbReference>
<dbReference type="SUPFAM" id="SSF55186">
    <property type="entry name" value="ThrRS/AlaRS common domain"/>
    <property type="match status" value="1"/>
</dbReference>
<dbReference type="PROSITE" id="PS50862">
    <property type="entry name" value="AA_TRNA_LIGASE_II"/>
    <property type="match status" value="1"/>
</dbReference>
<dbReference type="PROSITE" id="PS51880">
    <property type="entry name" value="TGS"/>
    <property type="match status" value="1"/>
</dbReference>